<keyword id="KW-0066">ATP synthesis</keyword>
<keyword id="KW-0067">ATP-binding</keyword>
<keyword id="KW-0997">Cell inner membrane</keyword>
<keyword id="KW-1003">Cell membrane</keyword>
<keyword id="KW-0139">CF(1)</keyword>
<keyword id="KW-0375">Hydrogen ion transport</keyword>
<keyword id="KW-0406">Ion transport</keyword>
<keyword id="KW-0472">Membrane</keyword>
<keyword id="KW-0547">Nucleotide-binding</keyword>
<keyword id="KW-1185">Reference proteome</keyword>
<keyword id="KW-1278">Translocase</keyword>
<keyword id="KW-0813">Transport</keyword>
<dbReference type="EC" id="7.1.2.2" evidence="1"/>
<dbReference type="EMBL" id="CP000142">
    <property type="protein sequence ID" value="ABA90224.1"/>
    <property type="molecule type" value="Genomic_DNA"/>
</dbReference>
<dbReference type="RefSeq" id="WP_011342777.1">
    <property type="nucleotide sequence ID" value="NC_007498.2"/>
</dbReference>
<dbReference type="SMR" id="Q3A083"/>
<dbReference type="STRING" id="338963.Pcar_2989"/>
<dbReference type="KEGG" id="pca:Pcar_2989"/>
<dbReference type="eggNOG" id="COG0055">
    <property type="taxonomic scope" value="Bacteria"/>
</dbReference>
<dbReference type="HOGENOM" id="CLU_022398_0_2_7"/>
<dbReference type="OrthoDB" id="9801639at2"/>
<dbReference type="Proteomes" id="UP000002534">
    <property type="component" value="Chromosome"/>
</dbReference>
<dbReference type="GO" id="GO:0005886">
    <property type="term" value="C:plasma membrane"/>
    <property type="evidence" value="ECO:0007669"/>
    <property type="project" value="UniProtKB-SubCell"/>
</dbReference>
<dbReference type="GO" id="GO:0045259">
    <property type="term" value="C:proton-transporting ATP synthase complex"/>
    <property type="evidence" value="ECO:0007669"/>
    <property type="project" value="UniProtKB-KW"/>
</dbReference>
<dbReference type="GO" id="GO:0005524">
    <property type="term" value="F:ATP binding"/>
    <property type="evidence" value="ECO:0007669"/>
    <property type="project" value="UniProtKB-UniRule"/>
</dbReference>
<dbReference type="GO" id="GO:0016887">
    <property type="term" value="F:ATP hydrolysis activity"/>
    <property type="evidence" value="ECO:0007669"/>
    <property type="project" value="InterPro"/>
</dbReference>
<dbReference type="GO" id="GO:0046933">
    <property type="term" value="F:proton-transporting ATP synthase activity, rotational mechanism"/>
    <property type="evidence" value="ECO:0007669"/>
    <property type="project" value="UniProtKB-UniRule"/>
</dbReference>
<dbReference type="GO" id="GO:0046961">
    <property type="term" value="F:proton-transporting ATPase activity, rotational mechanism"/>
    <property type="evidence" value="ECO:0007669"/>
    <property type="project" value="InterPro"/>
</dbReference>
<dbReference type="CDD" id="cd18110">
    <property type="entry name" value="ATP-synt_F1_beta_C"/>
    <property type="match status" value="1"/>
</dbReference>
<dbReference type="CDD" id="cd01133">
    <property type="entry name" value="F1-ATPase_beta_CD"/>
    <property type="match status" value="1"/>
</dbReference>
<dbReference type="FunFam" id="1.10.1140.10:FF:000006">
    <property type="entry name" value="ATP synthase subunit beta"/>
    <property type="match status" value="1"/>
</dbReference>
<dbReference type="FunFam" id="3.40.50.300:FF:001630">
    <property type="entry name" value="ATP synthase subunit beta"/>
    <property type="match status" value="1"/>
</dbReference>
<dbReference type="Gene3D" id="2.40.10.170">
    <property type="match status" value="1"/>
</dbReference>
<dbReference type="Gene3D" id="1.10.1140.10">
    <property type="entry name" value="Bovine Mitochondrial F1-atpase, Atp Synthase Beta Chain, Chain D, domain 3"/>
    <property type="match status" value="1"/>
</dbReference>
<dbReference type="Gene3D" id="3.40.50.300">
    <property type="entry name" value="P-loop containing nucleotide triphosphate hydrolases"/>
    <property type="match status" value="1"/>
</dbReference>
<dbReference type="HAMAP" id="MF_01347">
    <property type="entry name" value="ATP_synth_beta_bact"/>
    <property type="match status" value="1"/>
</dbReference>
<dbReference type="InterPro" id="IPR003593">
    <property type="entry name" value="AAA+_ATPase"/>
</dbReference>
<dbReference type="InterPro" id="IPR017691">
    <property type="entry name" value="Alt_ATPase_F1_bsu"/>
</dbReference>
<dbReference type="InterPro" id="IPR055190">
    <property type="entry name" value="ATP-synt_VA_C"/>
</dbReference>
<dbReference type="InterPro" id="IPR005722">
    <property type="entry name" value="ATP_synth_F1_bsu"/>
</dbReference>
<dbReference type="InterPro" id="IPR020003">
    <property type="entry name" value="ATPase_a/bsu_AS"/>
</dbReference>
<dbReference type="InterPro" id="IPR050053">
    <property type="entry name" value="ATPase_alpha/beta_chains"/>
</dbReference>
<dbReference type="InterPro" id="IPR004100">
    <property type="entry name" value="ATPase_F1/V1/A1_a/bsu_N"/>
</dbReference>
<dbReference type="InterPro" id="IPR036121">
    <property type="entry name" value="ATPase_F1/V1/A1_a/bsu_N_sf"/>
</dbReference>
<dbReference type="InterPro" id="IPR000194">
    <property type="entry name" value="ATPase_F1/V1/A1_a/bsu_nucl-bd"/>
</dbReference>
<dbReference type="InterPro" id="IPR024034">
    <property type="entry name" value="ATPase_F1/V1_b/a_C"/>
</dbReference>
<dbReference type="InterPro" id="IPR027417">
    <property type="entry name" value="P-loop_NTPase"/>
</dbReference>
<dbReference type="NCBIfam" id="TIGR03305">
    <property type="entry name" value="alt_F1F0_F1_bet"/>
    <property type="match status" value="1"/>
</dbReference>
<dbReference type="NCBIfam" id="TIGR01039">
    <property type="entry name" value="atpD"/>
    <property type="match status" value="1"/>
</dbReference>
<dbReference type="PANTHER" id="PTHR15184">
    <property type="entry name" value="ATP SYNTHASE"/>
    <property type="match status" value="1"/>
</dbReference>
<dbReference type="PANTHER" id="PTHR15184:SF71">
    <property type="entry name" value="ATP SYNTHASE SUBUNIT BETA, MITOCHONDRIAL"/>
    <property type="match status" value="1"/>
</dbReference>
<dbReference type="Pfam" id="PF00006">
    <property type="entry name" value="ATP-synt_ab"/>
    <property type="match status" value="1"/>
</dbReference>
<dbReference type="Pfam" id="PF02874">
    <property type="entry name" value="ATP-synt_ab_N"/>
    <property type="match status" value="1"/>
</dbReference>
<dbReference type="Pfam" id="PF22919">
    <property type="entry name" value="ATP-synt_VA_C"/>
    <property type="match status" value="1"/>
</dbReference>
<dbReference type="SMART" id="SM00382">
    <property type="entry name" value="AAA"/>
    <property type="match status" value="1"/>
</dbReference>
<dbReference type="SUPFAM" id="SSF47917">
    <property type="entry name" value="C-terminal domain of alpha and beta subunits of F1 ATP synthase"/>
    <property type="match status" value="1"/>
</dbReference>
<dbReference type="SUPFAM" id="SSF50615">
    <property type="entry name" value="N-terminal domain of alpha and beta subunits of F1 ATP synthase"/>
    <property type="match status" value="1"/>
</dbReference>
<dbReference type="SUPFAM" id="SSF52540">
    <property type="entry name" value="P-loop containing nucleoside triphosphate hydrolases"/>
    <property type="match status" value="1"/>
</dbReference>
<dbReference type="PROSITE" id="PS00152">
    <property type="entry name" value="ATPASE_ALPHA_BETA"/>
    <property type="match status" value="1"/>
</dbReference>
<feature type="chain" id="PRO_0000339563" description="ATP synthase subunit beta 2">
    <location>
        <begin position="1"/>
        <end position="474"/>
    </location>
</feature>
<feature type="binding site" evidence="1">
    <location>
        <begin position="153"/>
        <end position="160"/>
    </location>
    <ligand>
        <name>ATP</name>
        <dbReference type="ChEBI" id="CHEBI:30616"/>
    </ligand>
</feature>
<protein>
    <recommendedName>
        <fullName evidence="1">ATP synthase subunit beta 2</fullName>
        <ecNumber evidence="1">7.1.2.2</ecNumber>
    </recommendedName>
    <alternativeName>
        <fullName evidence="1">ATP synthase F1 sector subunit beta 2</fullName>
    </alternativeName>
    <alternativeName>
        <fullName evidence="1">F-ATPase subunit beta 2</fullName>
    </alternativeName>
</protein>
<reference key="1">
    <citation type="submission" date="2005-10" db="EMBL/GenBank/DDBJ databases">
        <title>Complete sequence of Pelobacter carbinolicus DSM 2380.</title>
        <authorList>
            <person name="Copeland A."/>
            <person name="Lucas S."/>
            <person name="Lapidus A."/>
            <person name="Barry K."/>
            <person name="Detter J.C."/>
            <person name="Glavina T."/>
            <person name="Hammon N."/>
            <person name="Israni S."/>
            <person name="Pitluck S."/>
            <person name="Chertkov O."/>
            <person name="Schmutz J."/>
            <person name="Larimer F."/>
            <person name="Land M."/>
            <person name="Kyrpides N."/>
            <person name="Ivanova N."/>
            <person name="Richardson P."/>
        </authorList>
    </citation>
    <scope>NUCLEOTIDE SEQUENCE [LARGE SCALE GENOMIC DNA]</scope>
    <source>
        <strain>DSM 2380 / NBRC 103641 / GraBd1</strain>
    </source>
</reference>
<proteinExistence type="inferred from homology"/>
<sequence length="474" mass="51983">MKRQADRSGTVVAVRGGIVDARFDGEMPALHSLLLAGAQDEIVVEVMLHLDGGHVRGNALTPTQGLACGDTIKDSGAPLQAPVGQAILGRVFNVFGQPIDRREPPDGCRWRSVLTKPAGLTERSSKTEMFITGIKAIDVLAPLERGGKAGLFGGAGVGKTVLITELIHNMVGQHEGVSLFCGIGERCREGEELFREMREAGVLDNTVMVFGQMNEPPGARFRVGLTALTMAEYFRDDQGRDVLLLIDNIFRFIQAGMEISGLLGLMPSRLGYQPTMGTELAELQERISSTRHAAITSIQAVYVPADDFTDPAAVHTFSHLSASIVLSRRRASEGLYPAIDPLASTSNILNPRIVGERHYRLAQEIRRTLATYEELKDIIAMLGLEELSREDRRIVFRARRLERFLTQPFHTTQQFTGMQGRTVALDAALNGCEAILNDEFSEAPEKILYMIGGLEEARQRLREEETAGHGEEPP</sequence>
<accession>Q3A083</accession>
<organism>
    <name type="scientific">Syntrophotalea carbinolica (strain DSM 2380 / NBRC 103641 / GraBd1)</name>
    <name type="common">Pelobacter carbinolicus</name>
    <dbReference type="NCBI Taxonomy" id="338963"/>
    <lineage>
        <taxon>Bacteria</taxon>
        <taxon>Pseudomonadati</taxon>
        <taxon>Thermodesulfobacteriota</taxon>
        <taxon>Desulfuromonadia</taxon>
        <taxon>Desulfuromonadales</taxon>
        <taxon>Syntrophotaleaceae</taxon>
        <taxon>Syntrophotalea</taxon>
    </lineage>
</organism>
<evidence type="ECO:0000255" key="1">
    <source>
        <dbReference type="HAMAP-Rule" id="MF_01347"/>
    </source>
</evidence>
<gene>
    <name evidence="1" type="primary">atpD2</name>
    <name type="ordered locus">Pcar_2989</name>
</gene>
<comment type="function">
    <text evidence="1">Produces ATP from ADP in the presence of a proton gradient across the membrane. The catalytic sites are hosted primarily by the beta subunits.</text>
</comment>
<comment type="catalytic activity">
    <reaction evidence="1">
        <text>ATP + H2O + 4 H(+)(in) = ADP + phosphate + 5 H(+)(out)</text>
        <dbReference type="Rhea" id="RHEA:57720"/>
        <dbReference type="ChEBI" id="CHEBI:15377"/>
        <dbReference type="ChEBI" id="CHEBI:15378"/>
        <dbReference type="ChEBI" id="CHEBI:30616"/>
        <dbReference type="ChEBI" id="CHEBI:43474"/>
        <dbReference type="ChEBI" id="CHEBI:456216"/>
        <dbReference type="EC" id="7.1.2.2"/>
    </reaction>
</comment>
<comment type="subunit">
    <text evidence="1">F-type ATPases have 2 components, CF(1) - the catalytic core - and CF(0) - the membrane proton channel. CF(1) has five subunits: alpha(3), beta(3), gamma(1), delta(1), epsilon(1). CF(0) has three main subunits: a(1), b(2) and c(9-12). The alpha and beta chains form an alternating ring which encloses part of the gamma chain. CF(1) is attached to CF(0) by a central stalk formed by the gamma and epsilon chains, while a peripheral stalk is formed by the delta and b chains.</text>
</comment>
<comment type="subcellular location">
    <subcellularLocation>
        <location evidence="1">Cell inner membrane</location>
        <topology evidence="1">Peripheral membrane protein</topology>
    </subcellularLocation>
</comment>
<comment type="similarity">
    <text evidence="1">Belongs to the ATPase alpha/beta chains family.</text>
</comment>
<name>ATPB2_SYNC1</name>